<proteinExistence type="inferred from homology"/>
<feature type="chain" id="PRO_1000195138" description="Holliday junction branch migration complex subunit RuvA">
    <location>
        <begin position="1"/>
        <end position="202"/>
    </location>
</feature>
<feature type="region of interest" description="Domain I" evidence="1">
    <location>
        <begin position="1"/>
        <end position="64"/>
    </location>
</feature>
<feature type="region of interest" description="Domain II" evidence="1">
    <location>
        <begin position="65"/>
        <end position="146"/>
    </location>
</feature>
<feature type="region of interest" description="Flexible linker" evidence="1">
    <location>
        <begin position="147"/>
        <end position="155"/>
    </location>
</feature>
<feature type="region of interest" description="Domain III" evidence="1">
    <location>
        <begin position="155"/>
        <end position="202"/>
    </location>
</feature>
<accession>B2KCD9</accession>
<dbReference type="EMBL" id="CP001055">
    <property type="protein sequence ID" value="ACC98060.1"/>
    <property type="molecule type" value="Genomic_DNA"/>
</dbReference>
<dbReference type="RefSeq" id="WP_012414675.1">
    <property type="nucleotide sequence ID" value="NC_010644.1"/>
</dbReference>
<dbReference type="SMR" id="B2KCD9"/>
<dbReference type="STRING" id="445932.Emin_0504"/>
<dbReference type="KEGG" id="emi:Emin_0504"/>
<dbReference type="HOGENOM" id="CLU_087936_3_0_0"/>
<dbReference type="OrthoDB" id="5293449at2"/>
<dbReference type="Proteomes" id="UP000001029">
    <property type="component" value="Chromosome"/>
</dbReference>
<dbReference type="GO" id="GO:0005737">
    <property type="term" value="C:cytoplasm"/>
    <property type="evidence" value="ECO:0007669"/>
    <property type="project" value="UniProtKB-SubCell"/>
</dbReference>
<dbReference type="GO" id="GO:0009379">
    <property type="term" value="C:Holliday junction helicase complex"/>
    <property type="evidence" value="ECO:0007669"/>
    <property type="project" value="InterPro"/>
</dbReference>
<dbReference type="GO" id="GO:0048476">
    <property type="term" value="C:Holliday junction resolvase complex"/>
    <property type="evidence" value="ECO:0007669"/>
    <property type="project" value="UniProtKB-UniRule"/>
</dbReference>
<dbReference type="GO" id="GO:0005524">
    <property type="term" value="F:ATP binding"/>
    <property type="evidence" value="ECO:0007669"/>
    <property type="project" value="InterPro"/>
</dbReference>
<dbReference type="GO" id="GO:0000400">
    <property type="term" value="F:four-way junction DNA binding"/>
    <property type="evidence" value="ECO:0007669"/>
    <property type="project" value="UniProtKB-UniRule"/>
</dbReference>
<dbReference type="GO" id="GO:0009378">
    <property type="term" value="F:four-way junction helicase activity"/>
    <property type="evidence" value="ECO:0007669"/>
    <property type="project" value="InterPro"/>
</dbReference>
<dbReference type="GO" id="GO:0006310">
    <property type="term" value="P:DNA recombination"/>
    <property type="evidence" value="ECO:0007669"/>
    <property type="project" value="UniProtKB-UniRule"/>
</dbReference>
<dbReference type="GO" id="GO:0006281">
    <property type="term" value="P:DNA repair"/>
    <property type="evidence" value="ECO:0007669"/>
    <property type="project" value="UniProtKB-UniRule"/>
</dbReference>
<dbReference type="CDD" id="cd14332">
    <property type="entry name" value="UBA_RuvA_C"/>
    <property type="match status" value="1"/>
</dbReference>
<dbReference type="Gene3D" id="1.10.150.20">
    <property type="entry name" value="5' to 3' exonuclease, C-terminal subdomain"/>
    <property type="match status" value="1"/>
</dbReference>
<dbReference type="Gene3D" id="1.10.8.10">
    <property type="entry name" value="DNA helicase RuvA subunit, C-terminal domain"/>
    <property type="match status" value="1"/>
</dbReference>
<dbReference type="Gene3D" id="2.40.50.140">
    <property type="entry name" value="Nucleic acid-binding proteins"/>
    <property type="match status" value="1"/>
</dbReference>
<dbReference type="HAMAP" id="MF_00031">
    <property type="entry name" value="DNA_HJ_migration_RuvA"/>
    <property type="match status" value="1"/>
</dbReference>
<dbReference type="InterPro" id="IPR013849">
    <property type="entry name" value="DNA_helicase_Holl-junc_RuvA_I"/>
</dbReference>
<dbReference type="InterPro" id="IPR012340">
    <property type="entry name" value="NA-bd_OB-fold"/>
</dbReference>
<dbReference type="InterPro" id="IPR000085">
    <property type="entry name" value="RuvA"/>
</dbReference>
<dbReference type="InterPro" id="IPR010994">
    <property type="entry name" value="RuvA_2-like"/>
</dbReference>
<dbReference type="InterPro" id="IPR011114">
    <property type="entry name" value="RuvA_C"/>
</dbReference>
<dbReference type="InterPro" id="IPR036267">
    <property type="entry name" value="RuvA_C_sf"/>
</dbReference>
<dbReference type="NCBIfam" id="TIGR00084">
    <property type="entry name" value="ruvA"/>
    <property type="match status" value="1"/>
</dbReference>
<dbReference type="Pfam" id="PF14520">
    <property type="entry name" value="HHH_5"/>
    <property type="match status" value="1"/>
</dbReference>
<dbReference type="Pfam" id="PF07499">
    <property type="entry name" value="RuvA_C"/>
    <property type="match status" value="1"/>
</dbReference>
<dbReference type="Pfam" id="PF01330">
    <property type="entry name" value="RuvA_N"/>
    <property type="match status" value="1"/>
</dbReference>
<dbReference type="SUPFAM" id="SSF46929">
    <property type="entry name" value="DNA helicase RuvA subunit, C-terminal domain"/>
    <property type="match status" value="1"/>
</dbReference>
<dbReference type="SUPFAM" id="SSF50249">
    <property type="entry name" value="Nucleic acid-binding proteins"/>
    <property type="match status" value="1"/>
</dbReference>
<dbReference type="SUPFAM" id="SSF47781">
    <property type="entry name" value="RuvA domain 2-like"/>
    <property type="match status" value="1"/>
</dbReference>
<evidence type="ECO:0000255" key="1">
    <source>
        <dbReference type="HAMAP-Rule" id="MF_00031"/>
    </source>
</evidence>
<sequence length="202" mass="21915">MIGYLKGQILSLSEDSVLILVNGVGYEVNCAPVAVSALEEGQETALYIAESISPYDGTVLYGFLTKEDKQLWAIFKTSIPNTGAKKALEYLNKALRSVADFHNAIVKKDPKILTGIFGFTAKTAEKLIHSLDGKMDAVTIAGVPKIKIEGEAPFMSEVMMALTALGYSPMEARKAIDQLYKTGLANDSVENIIRAALRILKK</sequence>
<comment type="function">
    <text evidence="1">The RuvA-RuvB-RuvC complex processes Holliday junction (HJ) DNA during genetic recombination and DNA repair, while the RuvA-RuvB complex plays an important role in the rescue of blocked DNA replication forks via replication fork reversal (RFR). RuvA specifically binds to HJ cruciform DNA, conferring on it an open structure. The RuvB hexamer acts as an ATP-dependent pump, pulling dsDNA into and through the RuvAB complex. HJ branch migration allows RuvC to scan DNA until it finds its consensus sequence, where it cleaves and resolves the cruciform DNA.</text>
</comment>
<comment type="subunit">
    <text evidence="1">Homotetramer. Forms an RuvA(8)-RuvB(12)-Holliday junction (HJ) complex. HJ DNA is sandwiched between 2 RuvA tetramers; dsDNA enters through RuvA and exits via RuvB. An RuvB hexamer assembles on each DNA strand where it exits the tetramer. Each RuvB hexamer is contacted by two RuvA subunits (via domain III) on 2 adjacent RuvB subunits; this complex drives branch migration. In the full resolvosome a probable DNA-RuvA(4)-RuvB(12)-RuvC(2) complex forms which resolves the HJ.</text>
</comment>
<comment type="subcellular location">
    <subcellularLocation>
        <location evidence="1">Cytoplasm</location>
    </subcellularLocation>
</comment>
<comment type="domain">
    <text evidence="1">Has three domains with a flexible linker between the domains II and III and assumes an 'L' shape. Domain III is highly mobile and contacts RuvB.</text>
</comment>
<comment type="similarity">
    <text evidence="1">Belongs to the RuvA family.</text>
</comment>
<name>RUVA_ELUMP</name>
<organism>
    <name type="scientific">Elusimicrobium minutum (strain Pei191)</name>
    <dbReference type="NCBI Taxonomy" id="445932"/>
    <lineage>
        <taxon>Bacteria</taxon>
        <taxon>Pseudomonadati</taxon>
        <taxon>Elusimicrobiota</taxon>
        <taxon>Elusimicrobia</taxon>
        <taxon>Elusimicrobiales</taxon>
        <taxon>Elusimicrobiaceae</taxon>
        <taxon>Elusimicrobium</taxon>
    </lineage>
</organism>
<keyword id="KW-0963">Cytoplasm</keyword>
<keyword id="KW-0227">DNA damage</keyword>
<keyword id="KW-0233">DNA recombination</keyword>
<keyword id="KW-0234">DNA repair</keyword>
<keyword id="KW-0238">DNA-binding</keyword>
<keyword id="KW-1185">Reference proteome</keyword>
<gene>
    <name evidence="1" type="primary">ruvA</name>
    <name type="ordered locus">Emin_0504</name>
</gene>
<protein>
    <recommendedName>
        <fullName evidence="1">Holliday junction branch migration complex subunit RuvA</fullName>
    </recommendedName>
</protein>
<reference key="1">
    <citation type="journal article" date="2009" name="Appl. Environ. Microbiol.">
        <title>Genomic analysis of 'Elusimicrobium minutum,' the first cultivated representative of the phylum 'Elusimicrobia' (formerly termite group 1).</title>
        <authorList>
            <person name="Herlemann D.P.R."/>
            <person name="Geissinger O."/>
            <person name="Ikeda-Ohtsubo W."/>
            <person name="Kunin V."/>
            <person name="Sun H."/>
            <person name="Lapidus A."/>
            <person name="Hugenholtz P."/>
            <person name="Brune A."/>
        </authorList>
    </citation>
    <scope>NUCLEOTIDE SEQUENCE [LARGE SCALE GENOMIC DNA]</scope>
    <source>
        <strain>Pei191</strain>
    </source>
</reference>